<dbReference type="EC" id="5.3.1.16"/>
<dbReference type="EMBL" id="AL111168">
    <property type="protein sequence ID" value="CAL35698.1"/>
    <property type="molecule type" value="Genomic_DNA"/>
</dbReference>
<dbReference type="PIR" id="G81255">
    <property type="entry name" value="G81255"/>
</dbReference>
<dbReference type="RefSeq" id="WP_002851391.1">
    <property type="nucleotide sequence ID" value="NZ_SZUC01000002.1"/>
</dbReference>
<dbReference type="RefSeq" id="YP_002344970.1">
    <property type="nucleotide sequence ID" value="NC_002163.1"/>
</dbReference>
<dbReference type="PDB" id="4GJ1">
    <property type="method" value="X-ray"/>
    <property type="resolution" value="2.15 A"/>
    <property type="chains" value="A=1-243"/>
</dbReference>
<dbReference type="PDBsum" id="4GJ1"/>
<dbReference type="SMR" id="Q9PM74"/>
<dbReference type="STRING" id="192222.Cj1601"/>
<dbReference type="PaxDb" id="192222-Cj1601"/>
<dbReference type="EnsemblBacteria" id="CAL35698">
    <property type="protein sequence ID" value="CAL35698"/>
    <property type="gene ID" value="Cj1601"/>
</dbReference>
<dbReference type="GeneID" id="904505"/>
<dbReference type="KEGG" id="cje:Cj1601"/>
<dbReference type="PATRIC" id="fig|192222.6.peg.1577"/>
<dbReference type="eggNOG" id="COG0106">
    <property type="taxonomic scope" value="Bacteria"/>
</dbReference>
<dbReference type="HOGENOM" id="CLU_048577_1_2_7"/>
<dbReference type="OrthoDB" id="9807749at2"/>
<dbReference type="UniPathway" id="UPA00031">
    <property type="reaction ID" value="UER00009"/>
</dbReference>
<dbReference type="EvolutionaryTrace" id="Q9PM74"/>
<dbReference type="Proteomes" id="UP000000799">
    <property type="component" value="Chromosome"/>
</dbReference>
<dbReference type="GO" id="GO:0005737">
    <property type="term" value="C:cytoplasm"/>
    <property type="evidence" value="ECO:0007669"/>
    <property type="project" value="UniProtKB-SubCell"/>
</dbReference>
<dbReference type="GO" id="GO:0003949">
    <property type="term" value="F:1-(5-phosphoribosyl)-5-[(5-phosphoribosylamino)methylideneamino]imidazole-4-carboxamide isomerase activity"/>
    <property type="evidence" value="ECO:0007669"/>
    <property type="project" value="UniProtKB-UniRule"/>
</dbReference>
<dbReference type="GO" id="GO:0000105">
    <property type="term" value="P:L-histidine biosynthetic process"/>
    <property type="evidence" value="ECO:0007669"/>
    <property type="project" value="UniProtKB-UniRule"/>
</dbReference>
<dbReference type="GO" id="GO:0000162">
    <property type="term" value="P:L-tryptophan biosynthetic process"/>
    <property type="evidence" value="ECO:0007669"/>
    <property type="project" value="TreeGrafter"/>
</dbReference>
<dbReference type="CDD" id="cd04732">
    <property type="entry name" value="HisA"/>
    <property type="match status" value="1"/>
</dbReference>
<dbReference type="FunFam" id="3.20.20.70:FF:000009">
    <property type="entry name" value="1-(5-phosphoribosyl)-5-[(5-phosphoribosylamino)methylideneamino] imidazole-4-carboxamide isomerase"/>
    <property type="match status" value="1"/>
</dbReference>
<dbReference type="Gene3D" id="3.20.20.70">
    <property type="entry name" value="Aldolase class I"/>
    <property type="match status" value="1"/>
</dbReference>
<dbReference type="HAMAP" id="MF_01014">
    <property type="entry name" value="HisA"/>
    <property type="match status" value="1"/>
</dbReference>
<dbReference type="InterPro" id="IPR013785">
    <property type="entry name" value="Aldolase_TIM"/>
</dbReference>
<dbReference type="InterPro" id="IPR006062">
    <property type="entry name" value="His_biosynth"/>
</dbReference>
<dbReference type="InterPro" id="IPR006063">
    <property type="entry name" value="HisA_bact_arch"/>
</dbReference>
<dbReference type="InterPro" id="IPR044524">
    <property type="entry name" value="Isoase_HisA-like"/>
</dbReference>
<dbReference type="InterPro" id="IPR023016">
    <property type="entry name" value="Isoase_HisA-like_bact"/>
</dbReference>
<dbReference type="InterPro" id="IPR011060">
    <property type="entry name" value="RibuloseP-bd_barrel"/>
</dbReference>
<dbReference type="NCBIfam" id="TIGR00007">
    <property type="entry name" value="1-(5-phosphoribosyl)-5-[(5-phosphoribosylamino)methylideneamino]imidazole-4-carboxamide isomerase"/>
    <property type="match status" value="1"/>
</dbReference>
<dbReference type="PANTHER" id="PTHR43090">
    <property type="entry name" value="1-(5-PHOSPHORIBOSYL)-5-[(5-PHOSPHORIBOSYLAMINO)METHYLIDENEAMINO] IMIDAZOLE-4-CARBOXAMIDE ISOMERASE"/>
    <property type="match status" value="1"/>
</dbReference>
<dbReference type="PANTHER" id="PTHR43090:SF2">
    <property type="entry name" value="1-(5-PHOSPHORIBOSYL)-5-[(5-PHOSPHORIBOSYLAMINO)METHYLIDENEAMINO] IMIDAZOLE-4-CARBOXAMIDE ISOMERASE"/>
    <property type="match status" value="1"/>
</dbReference>
<dbReference type="Pfam" id="PF00977">
    <property type="entry name" value="His_biosynth"/>
    <property type="match status" value="1"/>
</dbReference>
<dbReference type="SUPFAM" id="SSF51366">
    <property type="entry name" value="Ribulose-phoshate binding barrel"/>
    <property type="match status" value="1"/>
</dbReference>
<feature type="chain" id="PRO_0000141993" description="1-(5-phosphoribosyl)-5-[(5-phosphoribosylamino)methylideneamino] imidazole-4-carboxamide isomerase">
    <location>
        <begin position="1"/>
        <end position="243"/>
    </location>
</feature>
<feature type="active site" description="Proton acceptor" evidence="1">
    <location>
        <position position="9"/>
    </location>
</feature>
<feature type="active site" description="Proton donor" evidence="1">
    <location>
        <position position="131"/>
    </location>
</feature>
<feature type="strand" evidence="3">
    <location>
        <begin position="3"/>
        <end position="11"/>
    </location>
</feature>
<feature type="strand" evidence="3">
    <location>
        <begin position="14"/>
        <end position="19"/>
    </location>
</feature>
<feature type="strand" evidence="3">
    <location>
        <begin position="21"/>
        <end position="23"/>
    </location>
</feature>
<feature type="strand" evidence="3">
    <location>
        <begin position="25"/>
        <end position="28"/>
    </location>
</feature>
<feature type="helix" evidence="3">
    <location>
        <begin position="33"/>
        <end position="43"/>
    </location>
</feature>
<feature type="strand" evidence="3">
    <location>
        <begin position="47"/>
        <end position="52"/>
    </location>
</feature>
<feature type="helix" evidence="3">
    <location>
        <begin position="53"/>
        <end position="57"/>
    </location>
</feature>
<feature type="helix" evidence="3">
    <location>
        <begin position="59"/>
        <end position="61"/>
    </location>
</feature>
<feature type="helix" evidence="3">
    <location>
        <begin position="64"/>
        <end position="73"/>
    </location>
</feature>
<feature type="strand" evidence="3">
    <location>
        <begin position="76"/>
        <end position="83"/>
    </location>
</feature>
<feature type="helix" evidence="3">
    <location>
        <begin position="87"/>
        <end position="95"/>
    </location>
</feature>
<feature type="strand" evidence="3">
    <location>
        <begin position="99"/>
        <end position="103"/>
    </location>
</feature>
<feature type="turn" evidence="3">
    <location>
        <begin position="105"/>
        <end position="109"/>
    </location>
</feature>
<feature type="helix" evidence="3">
    <location>
        <begin position="111"/>
        <end position="121"/>
    </location>
</feature>
<feature type="turn" evidence="3">
    <location>
        <begin position="123"/>
        <end position="125"/>
    </location>
</feature>
<feature type="strand" evidence="3">
    <location>
        <begin position="126"/>
        <end position="140"/>
    </location>
</feature>
<feature type="helix" evidence="3">
    <location>
        <begin position="153"/>
        <end position="161"/>
    </location>
</feature>
<feature type="turn" evidence="3">
    <location>
        <begin position="162"/>
        <end position="164"/>
    </location>
</feature>
<feature type="strand" evidence="3">
    <location>
        <begin position="167"/>
        <end position="172"/>
    </location>
</feature>
<feature type="helix" evidence="3">
    <location>
        <begin position="184"/>
        <end position="193"/>
    </location>
</feature>
<feature type="strand" evidence="3">
    <location>
        <begin position="197"/>
        <end position="203"/>
    </location>
</feature>
<feature type="helix" evidence="3">
    <location>
        <begin position="208"/>
        <end position="213"/>
    </location>
</feature>
<feature type="turn" evidence="3">
    <location>
        <begin position="214"/>
        <end position="217"/>
    </location>
</feature>
<feature type="strand" evidence="3">
    <location>
        <begin position="219"/>
        <end position="223"/>
    </location>
</feature>
<feature type="helix" evidence="3">
    <location>
        <begin position="225"/>
        <end position="228"/>
    </location>
</feature>
<feature type="helix" evidence="3">
    <location>
        <begin position="234"/>
        <end position="241"/>
    </location>
</feature>
<reference key="1">
    <citation type="journal article" date="2000" name="Nature">
        <title>The genome sequence of the food-borne pathogen Campylobacter jejuni reveals hypervariable sequences.</title>
        <authorList>
            <person name="Parkhill J."/>
            <person name="Wren B.W."/>
            <person name="Mungall K.L."/>
            <person name="Ketley J.M."/>
            <person name="Churcher C.M."/>
            <person name="Basham D."/>
            <person name="Chillingworth T."/>
            <person name="Davies R.M."/>
            <person name="Feltwell T."/>
            <person name="Holroyd S."/>
            <person name="Jagels K."/>
            <person name="Karlyshev A.V."/>
            <person name="Moule S."/>
            <person name="Pallen M.J."/>
            <person name="Penn C.W."/>
            <person name="Quail M.A."/>
            <person name="Rajandream M.A."/>
            <person name="Rutherford K.M."/>
            <person name="van Vliet A.H.M."/>
            <person name="Whitehead S."/>
            <person name="Barrell B.G."/>
        </authorList>
    </citation>
    <scope>NUCLEOTIDE SEQUENCE [LARGE SCALE GENOMIC DNA]</scope>
    <source>
        <strain>ATCC 700819 / NCTC 11168</strain>
    </source>
</reference>
<name>HIS4_CAMJE</name>
<organism>
    <name type="scientific">Campylobacter jejuni subsp. jejuni serotype O:2 (strain ATCC 700819 / NCTC 11168)</name>
    <dbReference type="NCBI Taxonomy" id="192222"/>
    <lineage>
        <taxon>Bacteria</taxon>
        <taxon>Pseudomonadati</taxon>
        <taxon>Campylobacterota</taxon>
        <taxon>Epsilonproteobacteria</taxon>
        <taxon>Campylobacterales</taxon>
        <taxon>Campylobacteraceae</taxon>
        <taxon>Campylobacter</taxon>
    </lineage>
</organism>
<gene>
    <name type="primary">hisA</name>
    <name type="ordered locus">Cj1601</name>
</gene>
<sequence length="243" mass="26684">MTQIIPALDLIDGEVVRLVKGDYEQKKVYKYNPLKKFKEYEKAGAKELHLVDLTGAKDPSKRQFALIEKLAKEVSVNLQVGGGIRSKEEVKALLDCGVKRVVIGSMAIKDATLCLEILKEFGSEAIVLALDTILKEDYVVAVNAWQEASDKKLMEVLDFYSNKGLKHILCTDISKDGTMQGVNVRLYKLIHEIFPNICIQASGGVASLKDLENLKGICSGVIVGKALLDGVFSVEEGIRCLAN</sequence>
<comment type="catalytic activity">
    <reaction>
        <text>1-(5-phospho-beta-D-ribosyl)-5-[(5-phospho-beta-D-ribosylamino)methylideneamino]imidazole-4-carboxamide = 5-[(5-phospho-1-deoxy-D-ribulos-1-ylimino)methylamino]-1-(5-phospho-beta-D-ribosyl)imidazole-4-carboxamide</text>
        <dbReference type="Rhea" id="RHEA:15469"/>
        <dbReference type="ChEBI" id="CHEBI:58435"/>
        <dbReference type="ChEBI" id="CHEBI:58525"/>
        <dbReference type="EC" id="5.3.1.16"/>
    </reaction>
</comment>
<comment type="pathway">
    <text>Amino-acid biosynthesis; L-histidine biosynthesis; L-histidine from 5-phospho-alpha-D-ribose 1-diphosphate: step 4/9.</text>
</comment>
<comment type="subcellular location">
    <subcellularLocation>
        <location evidence="1">Cytoplasm</location>
    </subcellularLocation>
</comment>
<comment type="similarity">
    <text evidence="2">Belongs to the HisA/HisF family.</text>
</comment>
<protein>
    <recommendedName>
        <fullName>1-(5-phosphoribosyl)-5-[(5-phosphoribosylamino)methylideneamino] imidazole-4-carboxamide isomerase</fullName>
        <ecNumber>5.3.1.16</ecNumber>
    </recommendedName>
    <alternativeName>
        <fullName>Phosphoribosylformimino-5-aminoimidazole carboxamide ribotide isomerase</fullName>
    </alternativeName>
</protein>
<proteinExistence type="evidence at protein level"/>
<accession>Q9PM74</accession>
<accession>Q0P827</accession>
<keyword id="KW-0002">3D-structure</keyword>
<keyword id="KW-0028">Amino-acid biosynthesis</keyword>
<keyword id="KW-0963">Cytoplasm</keyword>
<keyword id="KW-0368">Histidine biosynthesis</keyword>
<keyword id="KW-0413">Isomerase</keyword>
<keyword id="KW-1185">Reference proteome</keyword>
<evidence type="ECO:0000250" key="1"/>
<evidence type="ECO:0000305" key="2"/>
<evidence type="ECO:0007829" key="3">
    <source>
        <dbReference type="PDB" id="4GJ1"/>
    </source>
</evidence>